<feature type="chain" id="PRO_1000057785" description="33 kDa chaperonin">
    <location>
        <begin position="1"/>
        <end position="292"/>
    </location>
</feature>
<feature type="disulfide bond" description="Redox-active" evidence="1">
    <location>
        <begin position="230"/>
        <end position="232"/>
    </location>
</feature>
<feature type="disulfide bond" description="Redox-active" evidence="1">
    <location>
        <begin position="263"/>
        <end position="266"/>
    </location>
</feature>
<protein>
    <recommendedName>
        <fullName evidence="1">33 kDa chaperonin</fullName>
    </recommendedName>
    <alternativeName>
        <fullName evidence="1">Heat shock protein 33 homolog</fullName>
        <shortName evidence="1">HSP33</shortName>
    </alternativeName>
</protein>
<dbReference type="EMBL" id="CP000653">
    <property type="protein sequence ID" value="ABP62469.1"/>
    <property type="molecule type" value="Genomic_DNA"/>
</dbReference>
<dbReference type="RefSeq" id="WP_015960775.1">
    <property type="nucleotide sequence ID" value="NC_009436.1"/>
</dbReference>
<dbReference type="SMR" id="A4WFI9"/>
<dbReference type="STRING" id="399742.Ent638_3814"/>
<dbReference type="KEGG" id="ent:Ent638_3814"/>
<dbReference type="eggNOG" id="COG1281">
    <property type="taxonomic scope" value="Bacteria"/>
</dbReference>
<dbReference type="HOGENOM" id="CLU_054493_0_0_6"/>
<dbReference type="OrthoDB" id="9793753at2"/>
<dbReference type="Proteomes" id="UP000000230">
    <property type="component" value="Chromosome"/>
</dbReference>
<dbReference type="GO" id="GO:0005737">
    <property type="term" value="C:cytoplasm"/>
    <property type="evidence" value="ECO:0007669"/>
    <property type="project" value="UniProtKB-SubCell"/>
</dbReference>
<dbReference type="GO" id="GO:0044183">
    <property type="term" value="F:protein folding chaperone"/>
    <property type="evidence" value="ECO:0007669"/>
    <property type="project" value="TreeGrafter"/>
</dbReference>
<dbReference type="GO" id="GO:0051082">
    <property type="term" value="F:unfolded protein binding"/>
    <property type="evidence" value="ECO:0007669"/>
    <property type="project" value="UniProtKB-UniRule"/>
</dbReference>
<dbReference type="GO" id="GO:0042026">
    <property type="term" value="P:protein refolding"/>
    <property type="evidence" value="ECO:0007669"/>
    <property type="project" value="TreeGrafter"/>
</dbReference>
<dbReference type="CDD" id="cd00498">
    <property type="entry name" value="Hsp33"/>
    <property type="match status" value="1"/>
</dbReference>
<dbReference type="Gene3D" id="1.10.287.480">
    <property type="entry name" value="helix hairpin bin"/>
    <property type="match status" value="1"/>
</dbReference>
<dbReference type="Gene3D" id="3.55.30.10">
    <property type="entry name" value="Hsp33 domain"/>
    <property type="match status" value="1"/>
</dbReference>
<dbReference type="Gene3D" id="3.90.1280.10">
    <property type="entry name" value="HSP33 redox switch-like"/>
    <property type="match status" value="1"/>
</dbReference>
<dbReference type="HAMAP" id="MF_00117">
    <property type="entry name" value="HslO"/>
    <property type="match status" value="1"/>
</dbReference>
<dbReference type="InterPro" id="IPR000397">
    <property type="entry name" value="Heat_shock_Hsp33"/>
</dbReference>
<dbReference type="InterPro" id="IPR016154">
    <property type="entry name" value="Heat_shock_Hsp33_C"/>
</dbReference>
<dbReference type="InterPro" id="IPR016153">
    <property type="entry name" value="Heat_shock_Hsp33_N"/>
</dbReference>
<dbReference type="InterPro" id="IPR023212">
    <property type="entry name" value="Hsp33_helix_hairpin_bin_dom_sf"/>
</dbReference>
<dbReference type="NCBIfam" id="NF001033">
    <property type="entry name" value="PRK00114.1"/>
    <property type="match status" value="1"/>
</dbReference>
<dbReference type="PANTHER" id="PTHR30111">
    <property type="entry name" value="33 KDA CHAPERONIN"/>
    <property type="match status" value="1"/>
</dbReference>
<dbReference type="PANTHER" id="PTHR30111:SF1">
    <property type="entry name" value="33 KDA CHAPERONIN"/>
    <property type="match status" value="1"/>
</dbReference>
<dbReference type="Pfam" id="PF01430">
    <property type="entry name" value="HSP33"/>
    <property type="match status" value="1"/>
</dbReference>
<dbReference type="PIRSF" id="PIRSF005261">
    <property type="entry name" value="Heat_shock_Hsp33"/>
    <property type="match status" value="1"/>
</dbReference>
<dbReference type="SUPFAM" id="SSF64397">
    <property type="entry name" value="Hsp33 domain"/>
    <property type="match status" value="1"/>
</dbReference>
<dbReference type="SUPFAM" id="SSF118352">
    <property type="entry name" value="HSP33 redox switch-like"/>
    <property type="match status" value="1"/>
</dbReference>
<gene>
    <name evidence="1" type="primary">hslO</name>
    <name type="ordered locus">Ent638_3814</name>
</gene>
<evidence type="ECO:0000255" key="1">
    <source>
        <dbReference type="HAMAP-Rule" id="MF_00117"/>
    </source>
</evidence>
<proteinExistence type="inferred from homology"/>
<keyword id="KW-0143">Chaperone</keyword>
<keyword id="KW-0963">Cytoplasm</keyword>
<keyword id="KW-1015">Disulfide bond</keyword>
<keyword id="KW-0676">Redox-active center</keyword>
<keyword id="KW-0862">Zinc</keyword>
<reference key="1">
    <citation type="journal article" date="2010" name="PLoS Genet.">
        <title>Genome sequence of the plant growth promoting endophytic bacterium Enterobacter sp. 638.</title>
        <authorList>
            <person name="Taghavi S."/>
            <person name="van der Lelie D."/>
            <person name="Hoffman A."/>
            <person name="Zhang Y.B."/>
            <person name="Walla M.D."/>
            <person name="Vangronsveld J."/>
            <person name="Newman L."/>
            <person name="Monchy S."/>
        </authorList>
    </citation>
    <scope>NUCLEOTIDE SEQUENCE [LARGE SCALE GENOMIC DNA]</scope>
    <source>
        <strain>638</strain>
    </source>
</reference>
<organism>
    <name type="scientific">Enterobacter sp. (strain 638)</name>
    <dbReference type="NCBI Taxonomy" id="399742"/>
    <lineage>
        <taxon>Bacteria</taxon>
        <taxon>Pseudomonadati</taxon>
        <taxon>Pseudomonadota</taxon>
        <taxon>Gammaproteobacteria</taxon>
        <taxon>Enterobacterales</taxon>
        <taxon>Enterobacteriaceae</taxon>
        <taxon>Enterobacter</taxon>
    </lineage>
</organism>
<sequence>MAQHDQLHRYLFEQFAVRGELVTVSETWKQILENHNYPQPVKRVLGELLVATSLLTATLKFAGDITVQLQGDGPMNMAVINGNNQQQMRGVARVQGEVPEGADLKTLVGNGFLVITITPDEGERYQGVVGLEGDTLAECLEDYFLRSEQLPTRLFIRTGEVEGQLAAGGMLLQVLPAQNAQGNDFEHLATLTETIKTEELFTLPANEVLWRLYHEEEVTLYDPQDVEFKCTCSRERCAGALRTLPDEEIDSIMAEDGEIDMNCDYCGSHYVFNAMDIAEIRNNASPADPQVH</sequence>
<comment type="function">
    <text evidence="1">Redox regulated molecular chaperone. Protects both thermally unfolding and oxidatively damaged proteins from irreversible aggregation. Plays an important role in the bacterial defense system toward oxidative stress.</text>
</comment>
<comment type="subcellular location">
    <subcellularLocation>
        <location evidence="1">Cytoplasm</location>
    </subcellularLocation>
</comment>
<comment type="PTM">
    <text evidence="1">Under oxidizing conditions two disulfide bonds are formed involving the reactive cysteines. Under reducing conditions zinc is bound to the reactive cysteines and the protein is inactive.</text>
</comment>
<comment type="similarity">
    <text evidence="1">Belongs to the HSP33 family.</text>
</comment>
<accession>A4WFI9</accession>
<name>HSLO_ENT38</name>